<protein>
    <recommendedName>
        <fullName>E3 ubiquitin-protein ligase complex SLX5-SLX8 subunit SLX5</fullName>
        <ecNumber evidence="7">2.3.2.27</ecNumber>
    </recommendedName>
    <alternativeName>
        <fullName>Hexose metabolism-related protein HEX3</fullName>
    </alternativeName>
    <alternativeName>
        <fullName evidence="16">RING-type E3 ubiquitin transferase SLX5</fullName>
    </alternativeName>
    <alternativeName>
        <fullName>Synthetic lethal of unknown function protein 5</fullName>
    </alternativeName>
</protein>
<name>SLX5_YEAST</name>
<proteinExistence type="evidence at protein level"/>
<reference key="1">
    <citation type="submission" date="1993-01" db="EMBL/GenBank/DDBJ databases">
        <authorList>
            <person name="Costanzo G."/>
            <person name="Sternglanz R."/>
        </authorList>
    </citation>
    <scope>NUCLEOTIDE SEQUENCE [GENOMIC DNA]</scope>
</reference>
<reference key="2">
    <citation type="journal article" date="1997" name="Nature">
        <title>The nucleotide sequence of Saccharomyces cerevisiae chromosome IV.</title>
        <authorList>
            <person name="Jacq C."/>
            <person name="Alt-Moerbe J."/>
            <person name="Andre B."/>
            <person name="Arnold W."/>
            <person name="Bahr A."/>
            <person name="Ballesta J.P.G."/>
            <person name="Bargues M."/>
            <person name="Baron L."/>
            <person name="Becker A."/>
            <person name="Biteau N."/>
            <person name="Bloecker H."/>
            <person name="Blugeon C."/>
            <person name="Boskovic J."/>
            <person name="Brandt P."/>
            <person name="Brueckner M."/>
            <person name="Buitrago M.J."/>
            <person name="Coster F."/>
            <person name="Delaveau T."/>
            <person name="del Rey F."/>
            <person name="Dujon B."/>
            <person name="Eide L.G."/>
            <person name="Garcia-Cantalejo J.M."/>
            <person name="Goffeau A."/>
            <person name="Gomez-Peris A."/>
            <person name="Granotier C."/>
            <person name="Hanemann V."/>
            <person name="Hankeln T."/>
            <person name="Hoheisel J.D."/>
            <person name="Jaeger W."/>
            <person name="Jimenez A."/>
            <person name="Jonniaux J.-L."/>
            <person name="Kraemer C."/>
            <person name="Kuester H."/>
            <person name="Laamanen P."/>
            <person name="Legros Y."/>
            <person name="Louis E.J."/>
            <person name="Moeller-Rieker S."/>
            <person name="Monnet A."/>
            <person name="Moro M."/>
            <person name="Mueller-Auer S."/>
            <person name="Nussbaumer B."/>
            <person name="Paricio N."/>
            <person name="Paulin L."/>
            <person name="Perea J."/>
            <person name="Perez-Alonso M."/>
            <person name="Perez-Ortin J.E."/>
            <person name="Pohl T.M."/>
            <person name="Prydz H."/>
            <person name="Purnelle B."/>
            <person name="Rasmussen S.W."/>
            <person name="Remacha M.A."/>
            <person name="Revuelta J.L."/>
            <person name="Rieger M."/>
            <person name="Salom D."/>
            <person name="Saluz H.P."/>
            <person name="Saiz J.E."/>
            <person name="Saren A.-M."/>
            <person name="Schaefer M."/>
            <person name="Scharfe M."/>
            <person name="Schmidt E.R."/>
            <person name="Schneider C."/>
            <person name="Scholler P."/>
            <person name="Schwarz S."/>
            <person name="Soler-Mira A."/>
            <person name="Urrestarazu L.A."/>
            <person name="Verhasselt P."/>
            <person name="Vissers S."/>
            <person name="Voet M."/>
            <person name="Volckaert G."/>
            <person name="Wagner G."/>
            <person name="Wambutt R."/>
            <person name="Wedler E."/>
            <person name="Wedler H."/>
            <person name="Woelfl S."/>
            <person name="Harris D.E."/>
            <person name="Bowman S."/>
            <person name="Brown D."/>
            <person name="Churcher C.M."/>
            <person name="Connor R."/>
            <person name="Dedman K."/>
            <person name="Gentles S."/>
            <person name="Hamlin N."/>
            <person name="Hunt S."/>
            <person name="Jones L."/>
            <person name="McDonald S."/>
            <person name="Murphy L.D."/>
            <person name="Niblett D."/>
            <person name="Odell C."/>
            <person name="Oliver K."/>
            <person name="Rajandream M.A."/>
            <person name="Richards C."/>
            <person name="Shore L."/>
            <person name="Walsh S.V."/>
            <person name="Barrell B.G."/>
            <person name="Dietrich F.S."/>
            <person name="Mulligan J.T."/>
            <person name="Allen E."/>
            <person name="Araujo R."/>
            <person name="Aviles E."/>
            <person name="Berno A."/>
            <person name="Carpenter J."/>
            <person name="Chen E."/>
            <person name="Cherry J.M."/>
            <person name="Chung E."/>
            <person name="Duncan M."/>
            <person name="Hunicke-Smith S."/>
            <person name="Hyman R.W."/>
            <person name="Komp C."/>
            <person name="Lashkari D."/>
            <person name="Lew H."/>
            <person name="Lin D."/>
            <person name="Mosedale D."/>
            <person name="Nakahara K."/>
            <person name="Namath A."/>
            <person name="Oefner P."/>
            <person name="Oh C."/>
            <person name="Petel F.X."/>
            <person name="Roberts D."/>
            <person name="Schramm S."/>
            <person name="Schroeder M."/>
            <person name="Shogren T."/>
            <person name="Shroff N."/>
            <person name="Winant A."/>
            <person name="Yelton M.A."/>
            <person name="Botstein D."/>
            <person name="Davis R.W."/>
            <person name="Johnston M."/>
            <person name="Andrews S."/>
            <person name="Brinkman R."/>
            <person name="Cooper J."/>
            <person name="Ding H."/>
            <person name="Du Z."/>
            <person name="Favello A."/>
            <person name="Fulton L."/>
            <person name="Gattung S."/>
            <person name="Greco T."/>
            <person name="Hallsworth K."/>
            <person name="Hawkins J."/>
            <person name="Hillier L.W."/>
            <person name="Jier M."/>
            <person name="Johnson D."/>
            <person name="Johnston L."/>
            <person name="Kirsten J."/>
            <person name="Kucaba T."/>
            <person name="Langston Y."/>
            <person name="Latreille P."/>
            <person name="Le T."/>
            <person name="Mardis E."/>
            <person name="Menezes S."/>
            <person name="Miller N."/>
            <person name="Nhan M."/>
            <person name="Pauley A."/>
            <person name="Peluso D."/>
            <person name="Rifkin L."/>
            <person name="Riles L."/>
            <person name="Taich A."/>
            <person name="Trevaskis E."/>
            <person name="Vignati D."/>
            <person name="Wilcox L."/>
            <person name="Wohldman P."/>
            <person name="Vaudin M."/>
            <person name="Wilson R."/>
            <person name="Waterston R."/>
            <person name="Albermann K."/>
            <person name="Hani J."/>
            <person name="Heumann K."/>
            <person name="Kleine K."/>
            <person name="Mewes H.-W."/>
            <person name="Zollner A."/>
            <person name="Zaccaria P."/>
        </authorList>
    </citation>
    <scope>NUCLEOTIDE SEQUENCE [LARGE SCALE GENOMIC DNA]</scope>
    <source>
        <strain>ATCC 204508 / S288c</strain>
    </source>
</reference>
<reference key="3">
    <citation type="journal article" date="2014" name="G3 (Bethesda)">
        <title>The reference genome sequence of Saccharomyces cerevisiae: Then and now.</title>
        <authorList>
            <person name="Engel S.R."/>
            <person name="Dietrich F.S."/>
            <person name="Fisk D.G."/>
            <person name="Binkley G."/>
            <person name="Balakrishnan R."/>
            <person name="Costanzo M.C."/>
            <person name="Dwight S.S."/>
            <person name="Hitz B.C."/>
            <person name="Karra K."/>
            <person name="Nash R.S."/>
            <person name="Weng S."/>
            <person name="Wong E.D."/>
            <person name="Lloyd P."/>
            <person name="Skrzypek M.S."/>
            <person name="Miyasato S.R."/>
            <person name="Simison M."/>
            <person name="Cherry J.M."/>
        </authorList>
    </citation>
    <scope>GENOME REANNOTATION</scope>
    <source>
        <strain>ATCC 204508 / S288c</strain>
    </source>
</reference>
<reference key="4">
    <citation type="journal article" date="2001" name="Genetics">
        <title>Requirement for three novel protein complexes in the absence of the Sgs1 DNA helicase in Saccharomyces cerevisiae.</title>
        <authorList>
            <person name="Mullen J.R."/>
            <person name="Kaliraman V."/>
            <person name="Ibrahim S.S."/>
            <person name="Brill S.J."/>
        </authorList>
    </citation>
    <scope>FUNCTION IN DEGRADATION OF SUMOYLATED PROTEINS</scope>
    <scope>INTERACTION WITH SLX8</scope>
</reference>
<reference key="5">
    <citation type="journal article" date="2006" name="DNA Repair">
        <title>Suppression of genomic instability by SLX5 and SLX8 in Saccharomyces cerevisiae.</title>
        <authorList>
            <person name="Zhang C."/>
            <person name="Roberts T.M."/>
            <person name="Yang J."/>
            <person name="Desai R."/>
            <person name="Brown G.W."/>
        </authorList>
    </citation>
    <scope>FUNCTION IN STABILIZATION OF DNA DAMAGE</scope>
</reference>
<reference key="6">
    <citation type="journal article" date="2006" name="Genetics">
        <title>Genetic analysis connects SLX5 and SLX8 to the SUMO pathway in Saccharomyces cerevisiae.</title>
        <authorList>
            <person name="Wang Z."/>
            <person name="Jones G.M."/>
            <person name="Prelich G."/>
        </authorList>
    </citation>
    <scope>FUNCTION IN STABILIZATION OF DNA DAMAGE</scope>
</reference>
<reference key="7">
    <citation type="journal article" date="2007" name="Cell Cycle">
        <title>The yeast Slx5-Slx8 DNA integrity complex displays ubiquitin ligase activity.</title>
        <authorList>
            <person name="Ii T."/>
            <person name="Fung J."/>
            <person name="Mullen J.R."/>
            <person name="Brill S.J."/>
        </authorList>
    </citation>
    <scope>UBIQUITIN-PROTEIN LIGASE ACTIVITY</scope>
    <scope>FUNCTION IN STIMULATION OF UBIQUITIN CONJUGASTING ENZYMES</scope>
    <scope>INTERACTION WITH SLX8</scope>
</reference>
<reference key="8">
    <citation type="journal article" date="2007" name="DNA Repair">
        <title>Stimulation of in vitro sumoylation by Slx5-Slx8: evidence for a functional interaction with the SUMO pathway.</title>
        <authorList>
            <person name="Ii T."/>
            <person name="Mullen J.R."/>
            <person name="Slagle C.E."/>
            <person name="Brill S.J."/>
        </authorList>
    </citation>
    <scope>FUNCTION IN DEGRADATION OF SUMOYLATED PROTEINS</scope>
    <scope>INTERACTION WITH SLX8</scope>
</reference>
<reference key="9">
    <citation type="journal article" date="2007" name="J. Biol. Chem.">
        <title>The yeast Hex3.Slx8 heterodimer is a ubiquitin ligase stimulated by substrate sumoylation.</title>
        <authorList>
            <person name="Xie Y."/>
            <person name="Kerscher O."/>
            <person name="Kroetz M.B."/>
            <person name="McConchie H.F."/>
            <person name="Sung P."/>
            <person name="Hochstrasser M."/>
        </authorList>
    </citation>
    <scope>FUNCTION IN DEGRADATION OF SUMOYLATED PROTEINS</scope>
    <scope>INTERACTION WITH SLX8</scope>
</reference>
<reference key="10">
    <citation type="journal article" date="2007" name="Mol. Cell. Biol.">
        <title>The Slx5-Slx8 complex affects sumoylation of DNA repair proteins and negatively regulates recombination.</title>
        <authorList>
            <person name="Burgess R.C."/>
            <person name="Rahman S."/>
            <person name="Lisby M."/>
            <person name="Rothstein R."/>
            <person name="Zhao X."/>
        </authorList>
    </citation>
    <scope>FUNCTION IN NEGATIVE REGULATION OF RECOMBINATION</scope>
</reference>
<reference key="11">
    <citation type="journal article" date="2008" name="J. Biol. Chem.">
        <title>Activation of the Slx5-Slx8 ubiquitin ligase by poly-small ubiquitin-like modifier conjugates.</title>
        <authorList>
            <person name="Mullen J.R."/>
            <person name="Brill S.J."/>
        </authorList>
    </citation>
    <scope>FUNCTION IN DEGRADATION OF SUMOYLATED PROTEINS</scope>
</reference>
<reference key="12">
    <citation type="journal article" date="2008" name="Mol. Cell. Biol.">
        <title>Slx5 promotes transcriptional silencing and is required for robust growth in the absence of Sir2.</title>
        <authorList>
            <person name="Darst R.P."/>
            <person name="Garcia S.N."/>
            <person name="Koch M.R."/>
            <person name="Pillus L."/>
        </authorList>
    </citation>
    <scope>FUNCTION IN TRANSCRIPTIONAL SILENCING</scope>
    <scope>INTERACTION WITH SIR2</scope>
    <scope>SUBCELLULAR LOCATION</scope>
</reference>
<reference key="13">
    <citation type="journal article" date="2008" name="Mol. Cell. Proteomics">
        <title>A multidimensional chromatography technology for in-depth phosphoproteome analysis.</title>
        <authorList>
            <person name="Albuquerque C.P."/>
            <person name="Smolka M.B."/>
            <person name="Payne S.H."/>
            <person name="Bafna V."/>
            <person name="Eng J."/>
            <person name="Zhou H."/>
        </authorList>
    </citation>
    <scope>PHOSPHORYLATION [LARGE SCALE ANALYSIS] AT SER-29</scope>
    <scope>IDENTIFICATION BY MASS SPECTROMETRY [LARGE SCALE ANALYSIS]</scope>
</reference>
<reference key="14">
    <citation type="journal article" date="2008" name="Science">
        <title>Functional targeting of DNA damage to a nuclear pore-associated SUMO-dependent ubiquitin ligase.</title>
        <authorList>
            <person name="Nagai S."/>
            <person name="Dubrana K."/>
            <person name="Tsai-Pflugfelder M."/>
            <person name="Davidson M.B."/>
            <person name="Roberts T.M."/>
            <person name="Brown G.W."/>
            <person name="Varela E."/>
            <person name="Hediger F."/>
            <person name="Gasser S.M."/>
            <person name="Krogan N.J."/>
        </authorList>
    </citation>
    <scope>FUNCTION IN DEGRADATION OF SUMOYLATED PROTEINS</scope>
    <scope>INTERACTION WITH SLX8</scope>
    <scope>SUBCELLULAR LOCATION</scope>
</reference>
<reference key="15">
    <citation type="journal article" date="2009" name="Cell Cycle">
        <title>The SUMO-targeted ubiquitin ligase subunit Slx5 resides in nuclear foci and at sites of DNA breaks.</title>
        <authorList>
            <person name="Cook C.E."/>
            <person name="Hochstrasser M."/>
            <person name="Kerscher O."/>
        </authorList>
    </citation>
    <scope>FUNCTION</scope>
    <scope>SUBCELLULAR LOCATION</scope>
</reference>
<reference key="16">
    <citation type="journal article" date="2009" name="Science">
        <title>Global analysis of Cdk1 substrate phosphorylation sites provides insights into evolution.</title>
        <authorList>
            <person name="Holt L.J."/>
            <person name="Tuch B.B."/>
            <person name="Villen J."/>
            <person name="Johnson A.D."/>
            <person name="Gygi S.P."/>
            <person name="Morgan D.O."/>
        </authorList>
    </citation>
    <scope>PHOSPHORYLATION [LARGE SCALE ANALYSIS] AT SER-14 AND SER-29</scope>
    <scope>IDENTIFICATION BY MASS SPECTROMETRY [LARGE SCALE ANALYSIS]</scope>
</reference>
<reference key="17">
    <citation type="journal article" date="2013" name="PLoS ONE">
        <title>Centromere binding and a conserved role in chromosome stability for SUMO-dependent ubiquitin ligases.</title>
        <authorList>
            <person name="van de Pasch L.A."/>
            <person name="Miles A.J."/>
            <person name="Nijenhuis W."/>
            <person name="Brabers N.A."/>
            <person name="van Leenen D."/>
            <person name="Lijnzaad P."/>
            <person name="Brown M.K."/>
            <person name="Ouellet J."/>
            <person name="Barral Y."/>
            <person name="Kops G.J."/>
            <person name="Holstege F.C."/>
        </authorList>
    </citation>
    <scope>FUNCTION</scope>
    <scope>DISRUPTION PHENOTYPE</scope>
    <scope>SUBCELLULAR LOCATION</scope>
</reference>
<reference key="18">
    <citation type="journal article" date="2016" name="Dev. Cell">
        <title>Regulation of a spindle positioning factor at kinetochores by SUMO-targeted ubiquitin ligases.</title>
        <authorList>
            <person name="Schweiggert J."/>
            <person name="Stevermann L."/>
            <person name="Panigada D."/>
            <person name="Kammerer D."/>
            <person name="Liakopoulos D."/>
        </authorList>
    </citation>
    <scope>FUNCTION</scope>
    <scope>INTERACTION WITH KAR9</scope>
    <scope>SUBCELLULAR LOCATION</scope>
</reference>
<reference key="19">
    <citation type="journal article" date="2016" name="Mol. Biol. Cell">
        <title>SUMO-targeted ubiquitin ligase (STUbL) Slx5 regulates proteolysis of centromeric histone H3 variant Cse4 and prevents its mislocalization to euchromatin.</title>
        <authorList>
            <person name="Ohkuni K."/>
            <person name="Takahashi Y."/>
            <person name="Fulp A."/>
            <person name="Lawrimore J."/>
            <person name="Au W.C."/>
            <person name="Pasupala N."/>
            <person name="Levy-Myers R."/>
            <person name="Warren J."/>
            <person name="Strunnikov A."/>
            <person name="Baker R.E."/>
            <person name="Kerscher O."/>
            <person name="Bloom K."/>
            <person name="Basrai M.A."/>
        </authorList>
    </citation>
    <scope>FUNCTION</scope>
</reference>
<reference key="20">
    <citation type="journal article" date="2018" name="Nat. Commun.">
        <title>Slx5-Slx8 ubiquitin ligase targets active pools of the Yen1 nuclease to limit crossover formation.</title>
        <authorList>
            <person name="Talhaoui I."/>
            <person name="Bernal M."/>
            <person name="Mullen J.R."/>
            <person name="Dorison H."/>
            <person name="Palancade B."/>
            <person name="Brill S.J."/>
            <person name="Mazon G."/>
        </authorList>
    </citation>
    <scope>FUNCTION</scope>
</reference>
<reference key="21">
    <citation type="journal article" date="2019" name="EMBO J.">
        <title>Slx5/Slx8-dependent ubiquitin hotspots on chromatin contribute to stress tolerance.</title>
        <authorList>
            <person name="Hoepfler M."/>
            <person name="Kern M.J."/>
            <person name="Straub T."/>
            <person name="Prytuliak R."/>
            <person name="Habermann B.H."/>
            <person name="Pfander B."/>
            <person name="Jentsch S."/>
        </authorList>
    </citation>
    <scope>FUNCTION</scope>
    <scope>SUBCELLULAR LOCATION</scope>
    <scope>DNA-BINDING</scope>
    <scope>INTERACTION WITH EUC1</scope>
    <scope>DOMAIN</scope>
    <scope>MUTAGENESIS OF 201-SER--LEU-335</scope>
</reference>
<keyword id="KW-0137">Centromere</keyword>
<keyword id="KW-0158">Chromosome</keyword>
<keyword id="KW-0227">DNA damage</keyword>
<keyword id="KW-0234">DNA repair</keyword>
<keyword id="KW-0995">Kinetochore</keyword>
<keyword id="KW-0539">Nucleus</keyword>
<keyword id="KW-0597">Phosphoprotein</keyword>
<keyword id="KW-1185">Reference proteome</keyword>
<keyword id="KW-0678">Repressor</keyword>
<keyword id="KW-0804">Transcription</keyword>
<keyword id="KW-0805">Transcription regulation</keyword>
<keyword id="KW-0808">Transferase</keyword>
<keyword id="KW-0833">Ubl conjugation pathway</keyword>
<evidence type="ECO:0000256" key="1">
    <source>
        <dbReference type="SAM" id="MobiDB-lite"/>
    </source>
</evidence>
<evidence type="ECO:0000269" key="2">
    <source>
    </source>
</evidence>
<evidence type="ECO:0000269" key="3">
    <source>
    </source>
</evidence>
<evidence type="ECO:0000269" key="4">
    <source>
    </source>
</evidence>
<evidence type="ECO:0000269" key="5">
    <source>
    </source>
</evidence>
<evidence type="ECO:0000269" key="6">
    <source>
    </source>
</evidence>
<evidence type="ECO:0000269" key="7">
    <source>
    </source>
</evidence>
<evidence type="ECO:0000269" key="8">
    <source>
    </source>
</evidence>
<evidence type="ECO:0000269" key="9">
    <source>
    </source>
</evidence>
<evidence type="ECO:0000269" key="10">
    <source>
    </source>
</evidence>
<evidence type="ECO:0000269" key="11">
    <source>
    </source>
</evidence>
<evidence type="ECO:0000269" key="12">
    <source>
    </source>
</evidence>
<evidence type="ECO:0000269" key="13">
    <source>
    </source>
</evidence>
<evidence type="ECO:0000269" key="14">
    <source>
    </source>
</evidence>
<evidence type="ECO:0000269" key="15">
    <source>
    </source>
</evidence>
<evidence type="ECO:0000305" key="16"/>
<evidence type="ECO:0007744" key="17">
    <source>
    </source>
</evidence>
<evidence type="ECO:0007744" key="18">
    <source>
    </source>
</evidence>
<organism>
    <name type="scientific">Saccharomyces cerevisiae (strain ATCC 204508 / S288c)</name>
    <name type="common">Baker's yeast</name>
    <dbReference type="NCBI Taxonomy" id="559292"/>
    <lineage>
        <taxon>Eukaryota</taxon>
        <taxon>Fungi</taxon>
        <taxon>Dikarya</taxon>
        <taxon>Ascomycota</taxon>
        <taxon>Saccharomycotina</taxon>
        <taxon>Saccharomycetes</taxon>
        <taxon>Saccharomycetales</taxon>
        <taxon>Saccharomycetaceae</taxon>
        <taxon>Saccharomyces</taxon>
    </lineage>
</organism>
<accession>P32828</accession>
<accession>D6VRX6</accession>
<gene>
    <name type="primary">SLX5</name>
    <name type="synonym">HEX3</name>
    <name type="ordered locus">YDL013W</name>
    <name type="ORF">D2875</name>
</gene>
<comment type="function">
    <text evidence="2 3 4 5 6 7 8 9 10 11 12 13 14 15">Component of the SUMO-targeted ubiquitin ligase (STUbL) complex SLX5/SLX8 that mediates ubiquitination and subsequent desumoylation of sumoylated proteins and proteins containing SUMO-like domains for their degradation (PubMed:11139495, PubMed:16325482, PubMed:17669696, PubMed:17848550, PubMed:18032921, PubMed:18499666, PubMed:18948542, PubMed:31015336). The STUbL complex SLX5/SLX8 stimulates ubiquitin conjugating enzymes, including UBC1, UBC4, UBC5 and UBC13-MMS2, and mediates the proteolytic down-regulation of sumoylated proteins (PubMed:18032921). The STUbL complex SLX5/SLX8 is involved in ubiquitin-mediated degradation of histone variant CSE4, preventing mislocalization to euchromatin (PubMed:26960795). The complex plays an essential role in maintenance of chromosome stability and links SUMO-dependent ubiquitination to a centromere-specific function during mitosis (PubMed:23785440). The complex is involved in proteolysis of spindle positioning protein KAR9 and ensures correct spindle function by regulating levels of microtubule-associated proteins (PubMed:26906737). During replication, the complex helps prevent DNA lesions via recombination and has a role in localizing the DNA damage protein DCD2 (PubMed:16325482, PubMed:17591698). The complex especially ubiquitinates the nuclease YEN1 and prevents persistent accumulation of a fraction of YEN1 associated with sites of activity in late G2/M and helps maintain the balance between pro- and anti-crossover pathways during homologous recombination (PubMed:30479332). It is also involved in ubiquitin-mediated degradation of DNA repair proteins RAD52 and RAD57 (PubMed:18032921). Along with SIR2, promotes silencing of genes at telomeric or ribosomal DNA (rDNA) loci (PubMed:18086879). Finally, the complex is recruited to distinct genomic hotspots of non-H2B protein ubiquitination (ub-hotspots) by the sumoylated transcription factor-like protein EUC1 where it ubiquitinates EUC1 and presumably other targets (PubMed:31015336).</text>
</comment>
<comment type="catalytic activity">
    <reaction evidence="7">
        <text>S-ubiquitinyl-[E2 ubiquitin-conjugating enzyme]-L-cysteine + [acceptor protein]-L-lysine = [E2 ubiquitin-conjugating enzyme]-L-cysteine + N(6)-ubiquitinyl-[acceptor protein]-L-lysine.</text>
        <dbReference type="EC" id="2.3.2.27"/>
    </reaction>
</comment>
<comment type="pathway">
    <text evidence="7">Protein modification; protein ubiquitination.</text>
</comment>
<comment type="subunit">
    <text evidence="2 5 6 7 8 10 12 15">Component of the heterodimeric SUMO-targeted ubiquitin ligase (STUbL) complex composed of SLX5 and SLX8 (PubMed:11139495, PubMed:17669696, PubMed:17848550, PubMed:18032921, PubMed:18948542). Interacts with sirtuin SIR2 (PubMed:18086879). Interacts with KAR9 (PubMed:26906737). Interacts with EUC1 (PubMed:31015336).</text>
</comment>
<comment type="interaction">
    <interactant intactId="EBI-8276">
        <id>P32828</id>
    </interactant>
    <interactant intactId="EBI-22661">
        <id>P40072</id>
        <label>SLX8</label>
    </interactant>
    <organismsDiffer>false</organismsDiffer>
    <experiments>3</experiments>
</comment>
<comment type="subcellular location">
    <subcellularLocation>
        <location evidence="8 10 11">Nucleus</location>
    </subcellularLocation>
    <subcellularLocation>
        <location evidence="15">Chromosome</location>
    </subcellularLocation>
    <subcellularLocation>
        <location evidence="12">Chromosome</location>
        <location evidence="12">Centromere</location>
        <location evidence="12">Kinetochore</location>
    </subcellularLocation>
    <subcellularLocation>
        <location evidence="11">Chromosome</location>
        <location evidence="11">Centromere</location>
    </subcellularLocation>
    <text evidence="15">Localizes to few distinct genomic hotspots of non-H2B protein ubiquitination (ub-hotspots).</text>
</comment>
<comment type="domain">
    <text evidence="15">The region between Ser-201 and Leu-335 is required recruitment of SLX5 to ub-hotspots via interaction with EUC1.</text>
</comment>
<comment type="disruption phenotype">
    <text evidence="11">Leads to severe mitotic defects that include aneuploidy, spindle mispositioning, fish hooks and aberrant spindle kinetics.</text>
</comment>
<sequence length="619" mass="71071">MHSDTNGRTKSNNSPSDNNPNETVILIDSDKEEDASIREANLPVRLYPDRRVGRRRDALNRFVRSDSRSRNSQRTHITASSERPDFQANNDDITIIREVGRFFGDDGPIDPSAHYVDLDQEPGSETLETPRTIQVDNTNGYLNDNGNNNESDDGLTIVEERTTRPRVTLNLPGGERLEVTATTTDIPIRRSFEFQEDLGASRRQLLRRSATRARNLFVDRSDENDEDWTDDTHNLPEAIQRARRESRMRMSRRIAERQRRVQQQRVSSDENISTSIRLQSIRERIQSYTPDIRSAFHRAESLHEFRSILQNVAPITLQECEEELMALFTEFRNQLLQNWAIDRVRNTQEEALRLHREALERQERTAGRVFHRGTLRESITNYLNFNGEDGFLSRLWSGPALSDADEERHTQNIIDMIQEREERERDVVMKNLMNKTRAQQEEFEARAASLPEGYSASFDTTPKMKLDITKNGKEETIIVTDDDLAKTLEDIPVCCLCGAELGVGIPDDFTGISQKDRGVSFEGLVSKYKFHCPYQTLARPSMLDRDLSKRTFIASCGHAFCGRCFARIDNAKKKSKMPKKKLAQLKGSAHPDNYGPKLCPADSCKKLIRSRGRLKEVYF</sequence>
<feature type="chain" id="PRO_0000083954" description="E3 ubiquitin-protein ligase complex SLX5-SLX8 subunit SLX5">
    <location>
        <begin position="1"/>
        <end position="619"/>
    </location>
</feature>
<feature type="region of interest" description="Disordered" evidence="1">
    <location>
        <begin position="1"/>
        <end position="23"/>
    </location>
</feature>
<feature type="region of interest" description="Disordered" evidence="1">
    <location>
        <begin position="63"/>
        <end position="90"/>
    </location>
</feature>
<feature type="region of interest" description="EUC1 interaction domain" evidence="15">
    <location>
        <begin position="201"/>
        <end position="335"/>
    </location>
</feature>
<feature type="compositionally biased region" description="Low complexity" evidence="1">
    <location>
        <begin position="11"/>
        <end position="21"/>
    </location>
</feature>
<feature type="compositionally biased region" description="Polar residues" evidence="1">
    <location>
        <begin position="70"/>
        <end position="90"/>
    </location>
</feature>
<feature type="modified residue" description="Phosphoserine" evidence="18">
    <location>
        <position position="14"/>
    </location>
</feature>
<feature type="modified residue" description="Phosphoserine" evidence="17 18">
    <location>
        <position position="29"/>
    </location>
</feature>
<feature type="mutagenesis site" description="Leads to loss of SLX5 recruitment to ub-hotspots." evidence="15">
    <location>
        <begin position="201"/>
        <end position="335"/>
    </location>
</feature>
<dbReference type="EC" id="2.3.2.27" evidence="7"/>
<dbReference type="EMBL" id="L07745">
    <property type="protein sequence ID" value="AAA34671.1"/>
    <property type="molecule type" value="Genomic_DNA"/>
</dbReference>
<dbReference type="EMBL" id="Z48432">
    <property type="protein sequence ID" value="CAA88346.1"/>
    <property type="molecule type" value="Genomic_DNA"/>
</dbReference>
<dbReference type="EMBL" id="Z74061">
    <property type="protein sequence ID" value="CAA98570.1"/>
    <property type="molecule type" value="Genomic_DNA"/>
</dbReference>
<dbReference type="EMBL" id="BK006938">
    <property type="protein sequence ID" value="DAA11836.1"/>
    <property type="molecule type" value="Genomic_DNA"/>
</dbReference>
<dbReference type="PIR" id="S30780">
    <property type="entry name" value="S30780"/>
</dbReference>
<dbReference type="RefSeq" id="NP_010271.3">
    <property type="nucleotide sequence ID" value="NM_001180072.3"/>
</dbReference>
<dbReference type="BioGRID" id="32041">
    <property type="interactions" value="901"/>
</dbReference>
<dbReference type="ComplexPortal" id="CPX-3179">
    <property type="entry name" value="Slx5-Slx8 SUMO-targeted ubiquitin ligase (STUbL) complex"/>
</dbReference>
<dbReference type="DIP" id="DIP-727N"/>
<dbReference type="FunCoup" id="P32828">
    <property type="interactions" value="109"/>
</dbReference>
<dbReference type="IntAct" id="P32828">
    <property type="interactions" value="29"/>
</dbReference>
<dbReference type="MINT" id="P32828"/>
<dbReference type="STRING" id="4932.YDL013W"/>
<dbReference type="GlyGen" id="P32828">
    <property type="glycosylation" value="1 site, 1 O-linked glycan (1 site)"/>
</dbReference>
<dbReference type="iPTMnet" id="P32828"/>
<dbReference type="PaxDb" id="4932-YDL013W"/>
<dbReference type="PeptideAtlas" id="P32828"/>
<dbReference type="TopDownProteomics" id="P32828"/>
<dbReference type="EnsemblFungi" id="YDL013W_mRNA">
    <property type="protein sequence ID" value="YDL013W"/>
    <property type="gene ID" value="YDL013W"/>
</dbReference>
<dbReference type="GeneID" id="851549"/>
<dbReference type="KEGG" id="sce:YDL013W"/>
<dbReference type="AGR" id="SGD:S000002171"/>
<dbReference type="SGD" id="S000002171">
    <property type="gene designation" value="SLX5"/>
</dbReference>
<dbReference type="VEuPathDB" id="FungiDB:YDL013W"/>
<dbReference type="eggNOG" id="ENOG502QTIW">
    <property type="taxonomic scope" value="Eukaryota"/>
</dbReference>
<dbReference type="HOGENOM" id="CLU_445559_0_0_1"/>
<dbReference type="InParanoid" id="P32828"/>
<dbReference type="OMA" id="RCFARID"/>
<dbReference type="OrthoDB" id="4090114at2759"/>
<dbReference type="BioCyc" id="YEAST:G3O-29443-MONOMER"/>
<dbReference type="UniPathway" id="UPA00143"/>
<dbReference type="BioGRID-ORCS" id="851549">
    <property type="hits" value="2 hits in 10 CRISPR screens"/>
</dbReference>
<dbReference type="PRO" id="PR:P32828"/>
<dbReference type="Proteomes" id="UP000002311">
    <property type="component" value="Chromosome IV"/>
</dbReference>
<dbReference type="RNAct" id="P32828">
    <property type="molecule type" value="protein"/>
</dbReference>
<dbReference type="GO" id="GO:0000775">
    <property type="term" value="C:chromosome, centromeric region"/>
    <property type="evidence" value="ECO:0000314"/>
    <property type="project" value="SGD"/>
</dbReference>
<dbReference type="GO" id="GO:0000776">
    <property type="term" value="C:kinetochore"/>
    <property type="evidence" value="ECO:0007669"/>
    <property type="project" value="UniProtKB-KW"/>
</dbReference>
<dbReference type="GO" id="GO:0005634">
    <property type="term" value="C:nucleus"/>
    <property type="evidence" value="ECO:0000314"/>
    <property type="project" value="ComplexPortal"/>
</dbReference>
<dbReference type="GO" id="GO:0033768">
    <property type="term" value="C:SUMO-targeted ubiquitin ligase complex"/>
    <property type="evidence" value="ECO:0000314"/>
    <property type="project" value="SGD"/>
</dbReference>
<dbReference type="GO" id="GO:0032183">
    <property type="term" value="F:SUMO binding"/>
    <property type="evidence" value="ECO:0000314"/>
    <property type="project" value="SGD"/>
</dbReference>
<dbReference type="GO" id="GO:0016740">
    <property type="term" value="F:transferase activity"/>
    <property type="evidence" value="ECO:0007669"/>
    <property type="project" value="UniProtKB-KW"/>
</dbReference>
<dbReference type="GO" id="GO:0006915">
    <property type="term" value="P:apoptotic process"/>
    <property type="evidence" value="ECO:0000315"/>
    <property type="project" value="SGD"/>
</dbReference>
<dbReference type="GO" id="GO:0006974">
    <property type="term" value="P:DNA damage response"/>
    <property type="evidence" value="ECO:0000315"/>
    <property type="project" value="SGD"/>
</dbReference>
<dbReference type="GO" id="GO:0006281">
    <property type="term" value="P:DNA repair"/>
    <property type="evidence" value="ECO:0007669"/>
    <property type="project" value="UniProtKB-KW"/>
</dbReference>
<dbReference type="GO" id="GO:0016567">
    <property type="term" value="P:protein ubiquitination"/>
    <property type="evidence" value="ECO:0007669"/>
    <property type="project" value="UniProtKB-UniPathway"/>
</dbReference>
<dbReference type="GO" id="GO:0000723">
    <property type="term" value="P:telomere maintenance"/>
    <property type="evidence" value="ECO:0000315"/>
    <property type="project" value="SGD"/>
</dbReference>
<dbReference type="GO" id="GO:0006511">
    <property type="term" value="P:ubiquitin-dependent protein catabolic process"/>
    <property type="evidence" value="ECO:0000315"/>
    <property type="project" value="SGD"/>
</dbReference>
<dbReference type="InterPro" id="IPR038886">
    <property type="entry name" value="E3_SLX5/Rfp1"/>
</dbReference>
<dbReference type="PANTHER" id="PTHR28042">
    <property type="entry name" value="E3 UBIQUITIN-PROTEIN LIGASE COMPLEX SLX5-SLX8 SUBUNIT SLX5"/>
    <property type="match status" value="1"/>
</dbReference>
<dbReference type="PANTHER" id="PTHR28042:SF1">
    <property type="entry name" value="E3 UBIQUITIN-PROTEIN LIGASE COMPLEX SLX5-SLX8 SUBUNIT SLX5"/>
    <property type="match status" value="1"/>
</dbReference>